<gene>
    <name type="primary">pde7</name>
    <name type="ORF">DDB_G0289145</name>
</gene>
<evidence type="ECO:0000255" key="1"/>
<evidence type="ECO:0000269" key="2">
    <source>
    </source>
</evidence>
<evidence type="ECO:0000269" key="3">
    <source>
    </source>
</evidence>
<evidence type="ECO:0000303" key="4">
    <source>
    </source>
</evidence>
<evidence type="ECO:0000305" key="5"/>
<organism>
    <name type="scientific">Dictyostelium discoideum</name>
    <name type="common">Social amoeba</name>
    <dbReference type="NCBI Taxonomy" id="44689"/>
    <lineage>
        <taxon>Eukaryota</taxon>
        <taxon>Amoebozoa</taxon>
        <taxon>Evosea</taxon>
        <taxon>Eumycetozoa</taxon>
        <taxon>Dictyostelia</taxon>
        <taxon>Dictyosteliales</taxon>
        <taxon>Dictyosteliaceae</taxon>
        <taxon>Dictyostelium</taxon>
    </lineage>
</organism>
<comment type="function">
    <text evidence="2">Phosphodiesterase with dual cAMP/cGMP specificity. However, displays a preference for cAMP over cGMP. Seems to regulate cAMP/cGMP concentration especially during cell aggregation.</text>
</comment>
<comment type="catalytic activity">
    <reaction evidence="2">
        <text>3',5'-cyclic AMP + H2O = AMP + H(+)</text>
        <dbReference type="Rhea" id="RHEA:25277"/>
        <dbReference type="ChEBI" id="CHEBI:15377"/>
        <dbReference type="ChEBI" id="CHEBI:15378"/>
        <dbReference type="ChEBI" id="CHEBI:58165"/>
        <dbReference type="ChEBI" id="CHEBI:456215"/>
        <dbReference type="EC" id="3.1.4.53"/>
    </reaction>
    <physiologicalReaction direction="left-to-right" evidence="2">
        <dbReference type="Rhea" id="RHEA:25278"/>
    </physiologicalReaction>
</comment>
<comment type="catalytic activity">
    <reaction evidence="2">
        <text>3',5'-cyclic GMP + H2O = GMP + H(+)</text>
        <dbReference type="Rhea" id="RHEA:16957"/>
        <dbReference type="ChEBI" id="CHEBI:15377"/>
        <dbReference type="ChEBI" id="CHEBI:15378"/>
        <dbReference type="ChEBI" id="CHEBI:57746"/>
        <dbReference type="ChEBI" id="CHEBI:58115"/>
        <dbReference type="EC" id="3.1.4.35"/>
    </reaction>
    <physiologicalReaction direction="left-to-right" evidence="2">
        <dbReference type="Rhea" id="RHEA:16958"/>
    </physiologicalReaction>
</comment>
<comment type="activity regulation">
    <text evidence="2">Inhibited by dithiotreitol (DTT).</text>
</comment>
<comment type="biophysicochemical properties">
    <kinetics>
        <KM evidence="2">12.5 uM for cAMP</KM>
        <KM evidence="2">36 uM for cGMP</KM>
    </kinetics>
</comment>
<comment type="subcellular location">
    <subcellularLocation>
        <location evidence="2">Secreted</location>
        <location evidence="2">Extracellular space</location>
    </subcellularLocation>
    <subcellularLocation>
        <location evidence="2">Cell surface</location>
    </subcellularLocation>
</comment>
<comment type="induction">
    <text evidence="3">Down-regulated by growth on bacteria.</text>
</comment>
<comment type="similarity">
    <text evidence="5">Belongs to the cyclic nucleotide phosphodiesterase class-II family.</text>
</comment>
<reference key="1">
    <citation type="journal article" date="2005" name="Nature">
        <title>The genome of the social amoeba Dictyostelium discoideum.</title>
        <authorList>
            <person name="Eichinger L."/>
            <person name="Pachebat J.A."/>
            <person name="Gloeckner G."/>
            <person name="Rajandream M.A."/>
            <person name="Sucgang R."/>
            <person name="Berriman M."/>
            <person name="Song J."/>
            <person name="Olsen R."/>
            <person name="Szafranski K."/>
            <person name="Xu Q."/>
            <person name="Tunggal B."/>
            <person name="Kummerfeld S."/>
            <person name="Madera M."/>
            <person name="Konfortov B.A."/>
            <person name="Rivero F."/>
            <person name="Bankier A.T."/>
            <person name="Lehmann R."/>
            <person name="Hamlin N."/>
            <person name="Davies R."/>
            <person name="Gaudet P."/>
            <person name="Fey P."/>
            <person name="Pilcher K."/>
            <person name="Chen G."/>
            <person name="Saunders D."/>
            <person name="Sodergren E.J."/>
            <person name="Davis P."/>
            <person name="Kerhornou A."/>
            <person name="Nie X."/>
            <person name="Hall N."/>
            <person name="Anjard C."/>
            <person name="Hemphill L."/>
            <person name="Bason N."/>
            <person name="Farbrother P."/>
            <person name="Desany B."/>
            <person name="Just E."/>
            <person name="Morio T."/>
            <person name="Rost R."/>
            <person name="Churcher C.M."/>
            <person name="Cooper J."/>
            <person name="Haydock S."/>
            <person name="van Driessche N."/>
            <person name="Cronin A."/>
            <person name="Goodhead I."/>
            <person name="Muzny D.M."/>
            <person name="Mourier T."/>
            <person name="Pain A."/>
            <person name="Lu M."/>
            <person name="Harper D."/>
            <person name="Lindsay R."/>
            <person name="Hauser H."/>
            <person name="James K.D."/>
            <person name="Quiles M."/>
            <person name="Madan Babu M."/>
            <person name="Saito T."/>
            <person name="Buchrieser C."/>
            <person name="Wardroper A."/>
            <person name="Felder M."/>
            <person name="Thangavelu M."/>
            <person name="Johnson D."/>
            <person name="Knights A."/>
            <person name="Loulseged H."/>
            <person name="Mungall K.L."/>
            <person name="Oliver K."/>
            <person name="Price C."/>
            <person name="Quail M.A."/>
            <person name="Urushihara H."/>
            <person name="Hernandez J."/>
            <person name="Rabbinowitsch E."/>
            <person name="Steffen D."/>
            <person name="Sanders M."/>
            <person name="Ma J."/>
            <person name="Kohara Y."/>
            <person name="Sharp S."/>
            <person name="Simmonds M.N."/>
            <person name="Spiegler S."/>
            <person name="Tivey A."/>
            <person name="Sugano S."/>
            <person name="White B."/>
            <person name="Walker D."/>
            <person name="Woodward J.R."/>
            <person name="Winckler T."/>
            <person name="Tanaka Y."/>
            <person name="Shaulsky G."/>
            <person name="Schleicher M."/>
            <person name="Weinstock G.M."/>
            <person name="Rosenthal A."/>
            <person name="Cox E.C."/>
            <person name="Chisholm R.L."/>
            <person name="Gibbs R.A."/>
            <person name="Loomis W.F."/>
            <person name="Platzer M."/>
            <person name="Kay R.R."/>
            <person name="Williams J.G."/>
            <person name="Dear P.H."/>
            <person name="Noegel A.A."/>
            <person name="Barrell B.G."/>
            <person name="Kuspa A."/>
        </authorList>
    </citation>
    <scope>NUCLEOTIDE SEQUENCE [LARGE SCALE GENOMIC DNA]</scope>
    <source>
        <strain>AX4</strain>
    </source>
</reference>
<reference key="2">
    <citation type="journal article" date="2007" name="Biochem. J.">
        <title>Seven Dictyostelium discoideum phosphodiesterases degrade three pools of cAMP and cGMP.</title>
        <authorList>
            <person name="Bader S."/>
            <person name="Kortholt A."/>
            <person name="Van Haastert P.J.M."/>
        </authorList>
    </citation>
    <scope>FUNCTION</scope>
    <scope>CATALYTIC ACTIVITY</scope>
    <scope>BIOPHYSICOCHEMICAL PROPERTIES</scope>
    <scope>ACTIVITY REGULATION</scope>
    <scope>SUBCELLULAR LOCATION</scope>
</reference>
<reference key="3">
    <citation type="journal article" date="2008" name="BMC Genomics">
        <title>Genome-wide transcriptional changes induced by phagocytosis or growth on bacteria in Dictyostelium.</title>
        <authorList>
            <person name="Sillo A."/>
            <person name="Bloomfield G."/>
            <person name="Balest A."/>
            <person name="Balbo A."/>
            <person name="Pergolizzi B."/>
            <person name="Peracino B."/>
            <person name="Skelton J."/>
            <person name="Ivens A."/>
            <person name="Bozzaro S."/>
        </authorList>
    </citation>
    <scope>INDUCTION [LARGE SCALE ANALYSIS]</scope>
</reference>
<name>PDE7_DICDI</name>
<protein>
    <recommendedName>
        <fullName>cAMP/cGMP-dependent 3',5'-cAMP/cGMP phosphodiesterase 7</fullName>
        <ecNumber evidence="2">3.1.4.35</ecNumber>
        <ecNumber evidence="2">3.1.4.53</ecNumber>
    </recommendedName>
    <alternativeName>
        <fullName>Phosphodiesterase 7</fullName>
        <shortName evidence="4">ddPDE7</shortName>
    </alternativeName>
</protein>
<accession>Q54HY0</accession>
<dbReference type="EC" id="3.1.4.35" evidence="2"/>
<dbReference type="EC" id="3.1.4.53" evidence="2"/>
<dbReference type="EMBL" id="AAFI02000130">
    <property type="protein sequence ID" value="EAL62880.1"/>
    <property type="molecule type" value="Genomic_DNA"/>
</dbReference>
<dbReference type="RefSeq" id="XP_636383.1">
    <property type="nucleotide sequence ID" value="XM_631291.1"/>
</dbReference>
<dbReference type="SMR" id="Q54HY0"/>
<dbReference type="FunCoup" id="Q54HY0">
    <property type="interactions" value="8"/>
</dbReference>
<dbReference type="STRING" id="44689.Q54HY0"/>
<dbReference type="PaxDb" id="44689-DDB0238626"/>
<dbReference type="EnsemblProtists" id="EAL62880">
    <property type="protein sequence ID" value="EAL62880"/>
    <property type="gene ID" value="DDB_G0289145"/>
</dbReference>
<dbReference type="GeneID" id="8626984"/>
<dbReference type="KEGG" id="ddi:DDB_G0289145"/>
<dbReference type="dictyBase" id="DDB_G0289145">
    <property type="gene designation" value="pde7"/>
</dbReference>
<dbReference type="VEuPathDB" id="AmoebaDB:DDB_G0289145"/>
<dbReference type="HOGENOM" id="CLU_606124_0_0_1"/>
<dbReference type="InParanoid" id="Q54HY0"/>
<dbReference type="OMA" id="ATWFIKN"/>
<dbReference type="PhylomeDB" id="Q54HY0"/>
<dbReference type="SABIO-RK" id="Q54HY0"/>
<dbReference type="PRO" id="PR:Q54HY0"/>
<dbReference type="Proteomes" id="UP000002195">
    <property type="component" value="Chromosome 5"/>
</dbReference>
<dbReference type="GO" id="GO:0009986">
    <property type="term" value="C:cell surface"/>
    <property type="evidence" value="ECO:0007669"/>
    <property type="project" value="UniProtKB-SubCell"/>
</dbReference>
<dbReference type="GO" id="GO:0005576">
    <property type="term" value="C:extracellular region"/>
    <property type="evidence" value="ECO:0000314"/>
    <property type="project" value="dictyBase"/>
</dbReference>
<dbReference type="GO" id="GO:0004115">
    <property type="term" value="F:3',5'-cyclic-AMP phosphodiesterase activity"/>
    <property type="evidence" value="ECO:0000316"/>
    <property type="project" value="dictyBase"/>
</dbReference>
<dbReference type="GO" id="GO:0047555">
    <property type="term" value="F:3',5'-cyclic-GMP phosphodiesterase activity"/>
    <property type="evidence" value="ECO:0000316"/>
    <property type="project" value="dictyBase"/>
</dbReference>
<dbReference type="GO" id="GO:0030552">
    <property type="term" value="F:cAMP binding"/>
    <property type="evidence" value="ECO:0007669"/>
    <property type="project" value="UniProtKB-KW"/>
</dbReference>
<dbReference type="GO" id="GO:0030553">
    <property type="term" value="F:cGMP binding"/>
    <property type="evidence" value="ECO:0007669"/>
    <property type="project" value="UniProtKB-KW"/>
</dbReference>
<dbReference type="GO" id="GO:0006198">
    <property type="term" value="P:cAMP catabolic process"/>
    <property type="evidence" value="ECO:0007669"/>
    <property type="project" value="InterPro"/>
</dbReference>
<dbReference type="GO" id="GO:1902660">
    <property type="term" value="P:negative regulation of glucose mediated signaling pathway"/>
    <property type="evidence" value="ECO:0000318"/>
    <property type="project" value="GO_Central"/>
</dbReference>
<dbReference type="CDD" id="cd07735">
    <property type="entry name" value="class_II_PDE_MBL-fold"/>
    <property type="match status" value="1"/>
</dbReference>
<dbReference type="FunFam" id="3.60.15.10:FF:000064">
    <property type="entry name" value="Probable 3',5'-cyclic-nucleotide phosphodiesterase"/>
    <property type="match status" value="1"/>
</dbReference>
<dbReference type="Gene3D" id="3.60.15.10">
    <property type="entry name" value="Ribonuclease Z/Hydroxyacylglutathione hydrolase-like"/>
    <property type="match status" value="1"/>
</dbReference>
<dbReference type="InterPro" id="IPR024225">
    <property type="entry name" value="cAMP-PdiesteraseII_CS"/>
</dbReference>
<dbReference type="InterPro" id="IPR000396">
    <property type="entry name" value="Pdiesterase2"/>
</dbReference>
<dbReference type="InterPro" id="IPR036866">
    <property type="entry name" value="RibonucZ/Hydroxyglut_hydro"/>
</dbReference>
<dbReference type="PANTHER" id="PTHR28283">
    <property type="entry name" value="3',5'-CYCLIC-NUCLEOTIDE PHOSPHODIESTERASE 1"/>
    <property type="match status" value="1"/>
</dbReference>
<dbReference type="PANTHER" id="PTHR28283:SF1">
    <property type="entry name" value="3',5'-CYCLIC-NUCLEOTIDE PHOSPHODIESTERASE 1"/>
    <property type="match status" value="1"/>
</dbReference>
<dbReference type="Pfam" id="PF02112">
    <property type="entry name" value="PDEase_II"/>
    <property type="match status" value="1"/>
</dbReference>
<dbReference type="PIRSF" id="PIRSF000962">
    <property type="entry name" value="Cyc_nuc_PDEase"/>
    <property type="match status" value="1"/>
</dbReference>
<dbReference type="PRINTS" id="PR00388">
    <property type="entry name" value="PDIESTERASE2"/>
</dbReference>
<dbReference type="SUPFAM" id="SSF56281">
    <property type="entry name" value="Metallo-hydrolase/oxidoreductase"/>
    <property type="match status" value="1"/>
</dbReference>
<dbReference type="PROSITE" id="PS00607">
    <property type="entry name" value="PDEASE_II"/>
    <property type="match status" value="1"/>
</dbReference>
<sequence>MKYLILILIFFIEINNGSRLINSGNLFSELKDYYIPENLNYYSGGYSEQHCKDSSYITIPLGVTGGLDEGSLSSFLLTKKGSSLFIGLDAGTVWQGVRRLTMLQDFNSVFNITYPPWATLPEQRATWFIKNHIQGYLIGHSHLDHVGGLIVESAEDQLSPKKNELEVSQPEIYRGCIEMIHKMGYVSDFPNITSIPDQKKPIIGINETLYSMATDLFNGFVWPSLPNYGRYSYYYLGNGNQYSFKDLTPYANKYVTKVQNDFPFNHLVKSFEICHDSLTSTAFILTDSQSGEQIVFFSDTGISTTKCDWEFKILQVWRNIKIDKLKAVYIESSFTNEVADNVLFGHLRPKDIMKLMDSLLENSIQTSPPKTNLKHVKLIIEHIKPQVGMNQYYLTSQRMVYQQLQEINNHGVKVIIPNQGVPICL</sequence>
<proteinExistence type="evidence at protein level"/>
<feature type="signal peptide" evidence="1">
    <location>
        <begin position="1"/>
        <end position="17"/>
    </location>
</feature>
<feature type="chain" id="PRO_0000363968" description="cAMP/cGMP-dependent 3',5'-cAMP/cGMP phosphodiesterase 7">
    <location>
        <begin position="18"/>
        <end position="425"/>
    </location>
</feature>
<keyword id="KW-0114">cAMP</keyword>
<keyword id="KW-0116">cAMP-binding</keyword>
<keyword id="KW-0140">cGMP</keyword>
<keyword id="KW-0142">cGMP-binding</keyword>
<keyword id="KW-0378">Hydrolase</keyword>
<keyword id="KW-0547">Nucleotide-binding</keyword>
<keyword id="KW-1185">Reference proteome</keyword>
<keyword id="KW-0964">Secreted</keyword>
<keyword id="KW-0732">Signal</keyword>